<sequence>MRIPVDTSTSRRFTPPSTTLSPGKMSEPIPLNIADSSAALVGKLRSTDRNMVEVLSDHPGELVRTDSPNFLCSVLPTHWRCNKTLPIAFKVVALGEVPDGTLVTVMAGNDENYSAELRNATAAMKSQVARFNDLRFVGRSGRGKSFTLTITVFTNPPQVATYHRAIKITVDGPREPRRHRQKLDEQTKPGNLSFSERLSELEHFRRTAMRVSPHHPNPMPNPRATLNHSAAFNPQPQGQIQVADTRQVQASPPWSYDQSYQYLGSIATQSVHPATPISPGRASSMTSLSAELSSRLSGASDLTAFSDPRVGIDRQFSTLPSISDPRMHYPGAFTYTPTPVTSGIGIGMSAMTSATRYHTYLPPPYPGSSQAQSNPFQTSSPSYHLYYGTSAGSYHQFSMMSGGERSPPRILPPCTNASTGSTLLNPNLPNQSDVVEAEGSHSNSPTNMGSTPRLEEAVWRPY</sequence>
<organism>
    <name type="scientific">Xenopus laevis</name>
    <name type="common">African clawed frog</name>
    <dbReference type="NCBI Taxonomy" id="8355"/>
    <lineage>
        <taxon>Eukaryota</taxon>
        <taxon>Metazoa</taxon>
        <taxon>Chordata</taxon>
        <taxon>Craniata</taxon>
        <taxon>Vertebrata</taxon>
        <taxon>Euteleostomi</taxon>
        <taxon>Amphibia</taxon>
        <taxon>Batrachia</taxon>
        <taxon>Anura</taxon>
        <taxon>Pipoidea</taxon>
        <taxon>Pipidae</taxon>
        <taxon>Xenopodinae</taxon>
        <taxon>Xenopus</taxon>
        <taxon>Xenopus</taxon>
    </lineage>
</organism>
<comment type="function">
    <text evidence="5">Involved in primitive hematopoiesis in the embryo.</text>
</comment>
<comment type="subunit">
    <text evidence="1">Heterodimer with cbfb. runx1 binds DNA as a monomer and through the Runt domain. DNA-binding is increased by heterodimerization (By similarity).</text>
</comment>
<comment type="subcellular location">
    <subcellularLocation>
        <location evidence="1 2">Nucleus</location>
    </subcellularLocation>
</comment>
<comment type="alternative products">
    <event type="alternative splicing"/>
    <isoform>
        <id>Q6PF39-1</id>
        <name evidence="5">1</name>
        <sequence type="displayed"/>
    </isoform>
    <isoform>
        <id>Q6PF39-2</id>
        <name>2</name>
        <sequence type="described" ref="VSP_052947"/>
    </isoform>
</comment>
<comment type="tissue specificity">
    <text evidence="5">Shows a complex and dynamic expression pattern. In stage 14-24 embryos, expressed in a subset of neuroblasts in the lateral stripe of the neural plate. In late neurula stages, expression begins in the olfactory placodes. Also expressed in structures that play a role in blood formation: at stage 14, expressed on the anterior ventral side of the embryo in the anterior endomesoderm. As the embryo elongates, expression shifts gradually to a V-shaped expression pattern in the presumptive ventral blood island.</text>
</comment>
<comment type="developmental stage">
    <text evidence="5">Expressed both maternally and zygotically. Shows a small amount of maternal expression. Zygotic expression begins at stage 8 and steadily increases after this point.</text>
</comment>
<comment type="induction">
    <text evidence="4 5">By low levels of the dorsalizing factor LiCl. Inhibited by high doses of LiCl. In order to temporally control hematopoiesis, fgf-signaling inhibits expression in posterior regions of the embryo by antagonizing bmp-signaling.</text>
</comment>
<feature type="chain" id="PRO_0000351207" description="Runt-related transcription factor 1">
    <location>
        <begin position="1"/>
        <end position="462"/>
    </location>
</feature>
<feature type="domain" description="Runt" evidence="2">
    <location>
        <begin position="50"/>
        <end position="178"/>
    </location>
</feature>
<feature type="region of interest" description="Disordered" evidence="3">
    <location>
        <begin position="1"/>
        <end position="27"/>
    </location>
</feature>
<feature type="region of interest" description="Interaction with DNA" evidence="1">
    <location>
        <begin position="80"/>
        <end position="84"/>
    </location>
</feature>
<feature type="region of interest" description="Interaction with DNA" evidence="1">
    <location>
        <begin position="135"/>
        <end position="143"/>
    </location>
</feature>
<feature type="region of interest" description="Interaction with DNA" evidence="1">
    <location>
        <begin position="168"/>
        <end position="177"/>
    </location>
</feature>
<feature type="region of interest" description="Disordered" evidence="3">
    <location>
        <begin position="399"/>
        <end position="462"/>
    </location>
</feature>
<feature type="compositionally biased region" description="Low complexity" evidence="3">
    <location>
        <begin position="7"/>
        <end position="22"/>
    </location>
</feature>
<feature type="compositionally biased region" description="Polar residues" evidence="3">
    <location>
        <begin position="415"/>
        <end position="433"/>
    </location>
</feature>
<feature type="compositionally biased region" description="Polar residues" evidence="3">
    <location>
        <begin position="440"/>
        <end position="450"/>
    </location>
</feature>
<feature type="compositionally biased region" description="Basic and acidic residues" evidence="3">
    <location>
        <begin position="453"/>
        <end position="462"/>
    </location>
</feature>
<feature type="binding site" evidence="1 2">
    <location>
        <position position="112"/>
    </location>
    <ligand>
        <name>chloride</name>
        <dbReference type="ChEBI" id="CHEBI:17996"/>
        <label>1</label>
    </ligand>
</feature>
<feature type="binding site" evidence="1 2">
    <location>
        <position position="116"/>
    </location>
    <ligand>
        <name>chloride</name>
        <dbReference type="ChEBI" id="CHEBI:17996"/>
        <label>1</label>
    </ligand>
</feature>
<feature type="binding site" evidence="1 2">
    <location>
        <position position="139"/>
    </location>
    <ligand>
        <name>chloride</name>
        <dbReference type="ChEBI" id="CHEBI:17996"/>
        <label>2</label>
    </ligand>
</feature>
<feature type="binding site" evidence="1 2">
    <location>
        <position position="170"/>
    </location>
    <ligand>
        <name>chloride</name>
        <dbReference type="ChEBI" id="CHEBI:17996"/>
        <label>2</label>
    </ligand>
</feature>
<feature type="splice variant" id="VSP_052947" description="In isoform 2." evidence="8">
    <original>MRIPV</original>
    <variation>MASHSAFQSFPLYPPCFFR</variation>
    <location>
        <begin position="1"/>
        <end position="5"/>
    </location>
</feature>
<feature type="sequence conflict" description="In Ref. 1; AAC41269." evidence="9" ref="1">
    <original>V</original>
    <variation>L</variation>
    <location>
        <position position="74"/>
    </location>
</feature>
<feature type="sequence conflict" description="In Ref. 1; AAC41269." evidence="9" ref="1">
    <original>S</original>
    <variation>P</variation>
    <location>
        <position position="195"/>
    </location>
</feature>
<protein>
    <recommendedName>
        <fullName evidence="1">Runt-related transcription factor 1</fullName>
    </recommendedName>
    <alternativeName>
        <fullName evidence="7">Acute myeloid leukemia 1 protein</fullName>
        <shortName evidence="10">XAML</shortName>
    </alternativeName>
    <alternativeName>
        <fullName evidence="7">Core-binding factor subunit alpha-2</fullName>
        <shortName evidence="6 7">CBF-alpha-2</shortName>
    </alternativeName>
</protein>
<reference evidence="9 10" key="1">
    <citation type="journal article" date="1998" name="Development">
        <title>A Xenopus homologue of aml-1 reveals unexpected patterning mechanisms leading to the formation of embryonic blood.</title>
        <authorList>
            <person name="Tracey W.D.T. Jr."/>
            <person name="Pepling M.E."/>
            <person name="Horb M.E."/>
            <person name="Thomsen G.H."/>
            <person name="Gergen J.P."/>
        </authorList>
    </citation>
    <scope>NUCLEOTIDE SEQUENCE [MRNA] (ISOFORM 1)</scope>
    <scope>FUNCTION</scope>
    <scope>TISSUE SPECIFICITY</scope>
    <scope>DEVELOPMENTAL STAGE</scope>
    <scope>INDUCTION</scope>
    <source>
        <tissue evidence="5">Neurula</tissue>
    </source>
</reference>
<reference evidence="11" key="2">
    <citation type="submission" date="2003-09" db="EMBL/GenBank/DDBJ databases">
        <authorList>
            <consortium name="NIH - Xenopus Gene Collection (XGC) project"/>
        </authorList>
    </citation>
    <scope>NUCLEOTIDE SEQUENCE [LARGE SCALE MRNA] (ISOFORM 2)</scope>
    <source>
        <tissue evidence="11">Spleen</tissue>
    </source>
</reference>
<reference evidence="9" key="3">
    <citation type="journal article" date="2008" name="Blood">
        <title>Fibroblast growth factor controls the timing of Scl, Lmo2, and Runx1 expression during embryonic blood development.</title>
        <authorList>
            <person name="Walmsley M."/>
            <person name="Cleaver D."/>
            <person name="Patient R.K."/>
        </authorList>
    </citation>
    <scope>INDUCTION</scope>
</reference>
<reference evidence="9" key="4">
    <citation type="journal article" date="2000" name="Semin. Cell Dev. Biol.">
        <title>Potential roles for RUNX1 and its orthologs in determining hematopoietic cell fate.</title>
        <authorList>
            <person name="Tracey W.D.T. Jr."/>
            <person name="Speck N.A."/>
        </authorList>
    </citation>
    <scope>REVIEW</scope>
</reference>
<dbReference type="EMBL" id="AF035446">
    <property type="protein sequence ID" value="AAC41269.1"/>
    <property type="molecule type" value="mRNA"/>
</dbReference>
<dbReference type="EMBL" id="BC057739">
    <property type="protein sequence ID" value="AAH57739.1"/>
    <property type="molecule type" value="mRNA"/>
</dbReference>
<dbReference type="RefSeq" id="NP_001079966.1">
    <molecule id="Q6PF39-2"/>
    <property type="nucleotide sequence ID" value="NM_001086497.1"/>
</dbReference>
<dbReference type="RefSeq" id="XP_018100278.1">
    <property type="nucleotide sequence ID" value="XM_018244789.1"/>
</dbReference>
<dbReference type="SMR" id="Q6PF39"/>
<dbReference type="ELM" id="Q6PF39"/>
<dbReference type="DNASU" id="379657"/>
<dbReference type="GeneID" id="379657"/>
<dbReference type="KEGG" id="xla:379657"/>
<dbReference type="AGR" id="Xenbase:XB-GENE-864949"/>
<dbReference type="CTD" id="379657"/>
<dbReference type="Xenbase" id="XB-GENE-864949">
    <property type="gene designation" value="runx1.L"/>
</dbReference>
<dbReference type="OMA" id="YLENTHT"/>
<dbReference type="OrthoDB" id="10029800at2759"/>
<dbReference type="Proteomes" id="UP000186698">
    <property type="component" value="Chromosome 2L"/>
</dbReference>
<dbReference type="Bgee" id="379657">
    <property type="expression patterns" value="Expressed in spleen and 15 other cell types or tissues"/>
</dbReference>
<dbReference type="GO" id="GO:0005634">
    <property type="term" value="C:nucleus"/>
    <property type="evidence" value="ECO:0000250"/>
    <property type="project" value="UniProtKB"/>
</dbReference>
<dbReference type="GO" id="GO:0005524">
    <property type="term" value="F:ATP binding"/>
    <property type="evidence" value="ECO:0007669"/>
    <property type="project" value="InterPro"/>
</dbReference>
<dbReference type="GO" id="GO:0005509">
    <property type="term" value="F:calcium ion binding"/>
    <property type="evidence" value="ECO:0000250"/>
    <property type="project" value="UniProtKB"/>
</dbReference>
<dbReference type="GO" id="GO:0003677">
    <property type="term" value="F:DNA binding"/>
    <property type="evidence" value="ECO:0000250"/>
    <property type="project" value="UniProtKB"/>
</dbReference>
<dbReference type="GO" id="GO:0003700">
    <property type="term" value="F:DNA-binding transcription factor activity"/>
    <property type="evidence" value="ECO:0000250"/>
    <property type="project" value="UniProtKB"/>
</dbReference>
<dbReference type="GO" id="GO:0000981">
    <property type="term" value="F:DNA-binding transcription factor activity, RNA polymerase II-specific"/>
    <property type="evidence" value="ECO:0000318"/>
    <property type="project" value="GO_Central"/>
</dbReference>
<dbReference type="GO" id="GO:0046982">
    <property type="term" value="F:protein heterodimerization activity"/>
    <property type="evidence" value="ECO:0000250"/>
    <property type="project" value="UniProtKB"/>
</dbReference>
<dbReference type="GO" id="GO:0000978">
    <property type="term" value="F:RNA polymerase II cis-regulatory region sequence-specific DNA binding"/>
    <property type="evidence" value="ECO:0000318"/>
    <property type="project" value="GO_Central"/>
</dbReference>
<dbReference type="GO" id="GO:0002062">
    <property type="term" value="P:chondrocyte differentiation"/>
    <property type="evidence" value="ECO:0000318"/>
    <property type="project" value="GO_Central"/>
</dbReference>
<dbReference type="GO" id="GO:0030097">
    <property type="term" value="P:hemopoiesis"/>
    <property type="evidence" value="ECO:0000318"/>
    <property type="project" value="GO_Central"/>
</dbReference>
<dbReference type="GO" id="GO:0030182">
    <property type="term" value="P:neuron differentiation"/>
    <property type="evidence" value="ECO:0000318"/>
    <property type="project" value="GO_Central"/>
</dbReference>
<dbReference type="GO" id="GO:0001503">
    <property type="term" value="P:ossification"/>
    <property type="evidence" value="ECO:0000318"/>
    <property type="project" value="GO_Central"/>
</dbReference>
<dbReference type="GO" id="GO:0051094">
    <property type="term" value="P:positive regulation of developmental process"/>
    <property type="evidence" value="ECO:0007669"/>
    <property type="project" value="UniProtKB-ARBA"/>
</dbReference>
<dbReference type="GO" id="GO:0045893">
    <property type="term" value="P:positive regulation of DNA-templated transcription"/>
    <property type="evidence" value="ECO:0000250"/>
    <property type="project" value="UniProtKB"/>
</dbReference>
<dbReference type="GO" id="GO:0045944">
    <property type="term" value="P:positive regulation of transcription by RNA polymerase II"/>
    <property type="evidence" value="ECO:0007669"/>
    <property type="project" value="UniProtKB-ARBA"/>
</dbReference>
<dbReference type="GO" id="GO:0045595">
    <property type="term" value="P:regulation of cell differentiation"/>
    <property type="evidence" value="ECO:0000318"/>
    <property type="project" value="GO_Central"/>
</dbReference>
<dbReference type="GO" id="GO:0006357">
    <property type="term" value="P:regulation of transcription by RNA polymerase II"/>
    <property type="evidence" value="ECO:0000318"/>
    <property type="project" value="GO_Central"/>
</dbReference>
<dbReference type="FunFam" id="2.60.40.720:FF:000001">
    <property type="entry name" value="Runt-related transcription factor"/>
    <property type="match status" value="1"/>
</dbReference>
<dbReference type="FunFam" id="4.10.770.10:FF:000002">
    <property type="entry name" value="Runt-related transcription factor"/>
    <property type="match status" value="1"/>
</dbReference>
<dbReference type="Gene3D" id="2.60.40.720">
    <property type="match status" value="1"/>
</dbReference>
<dbReference type="Gene3D" id="4.10.770.10">
    <property type="entry name" value="Signal Protein Aml-1b, Chain A, domain 3"/>
    <property type="match status" value="1"/>
</dbReference>
<dbReference type="InterPro" id="IPR000040">
    <property type="entry name" value="AML1_Runt"/>
</dbReference>
<dbReference type="InterPro" id="IPR008967">
    <property type="entry name" value="p53-like_TF_DNA-bd_sf"/>
</dbReference>
<dbReference type="InterPro" id="IPR012346">
    <property type="entry name" value="p53/RUNT-type_TF_DNA-bd_sf"/>
</dbReference>
<dbReference type="InterPro" id="IPR013524">
    <property type="entry name" value="Runt_dom"/>
</dbReference>
<dbReference type="InterPro" id="IPR027384">
    <property type="entry name" value="Runx_central_dom_sf"/>
</dbReference>
<dbReference type="InterPro" id="IPR013711">
    <property type="entry name" value="RunxI_C_dom"/>
</dbReference>
<dbReference type="InterPro" id="IPR016554">
    <property type="entry name" value="TF_Runt-rel_RUNX"/>
</dbReference>
<dbReference type="PANTHER" id="PTHR11950">
    <property type="entry name" value="RUNT RELATED"/>
    <property type="match status" value="1"/>
</dbReference>
<dbReference type="PANTHER" id="PTHR11950:SF40">
    <property type="entry name" value="RUNT-RELATED TRANSCRIPTION FACTOR 1"/>
    <property type="match status" value="1"/>
</dbReference>
<dbReference type="Pfam" id="PF00853">
    <property type="entry name" value="Runt"/>
    <property type="match status" value="1"/>
</dbReference>
<dbReference type="Pfam" id="PF08504">
    <property type="entry name" value="RunxI"/>
    <property type="match status" value="1"/>
</dbReference>
<dbReference type="PIRSF" id="PIRSF009374">
    <property type="entry name" value="TF_Runt-rel_RUNX"/>
    <property type="match status" value="1"/>
</dbReference>
<dbReference type="PRINTS" id="PR00967">
    <property type="entry name" value="ONCOGENEAML1"/>
</dbReference>
<dbReference type="SUPFAM" id="SSF49417">
    <property type="entry name" value="p53-like transcription factors"/>
    <property type="match status" value="1"/>
</dbReference>
<dbReference type="PROSITE" id="PS51062">
    <property type="entry name" value="RUNT"/>
    <property type="match status" value="1"/>
</dbReference>
<name>RUNX1_XENLA</name>
<accession>Q6PF39</accession>
<accession>O73725</accession>
<keyword id="KW-0025">Alternative splicing</keyword>
<keyword id="KW-0868">Chloride</keyword>
<keyword id="KW-0217">Developmental protein</keyword>
<keyword id="KW-0238">DNA-binding</keyword>
<keyword id="KW-0539">Nucleus</keyword>
<keyword id="KW-1185">Reference proteome</keyword>
<keyword id="KW-0804">Transcription</keyword>
<keyword id="KW-0805">Transcription regulation</keyword>
<proteinExistence type="evidence at transcript level"/>
<evidence type="ECO:0000250" key="1">
    <source>
        <dbReference type="UniProtKB" id="Q01196"/>
    </source>
</evidence>
<evidence type="ECO:0000255" key="2">
    <source>
        <dbReference type="PROSITE-ProRule" id="PRU00399"/>
    </source>
</evidence>
<evidence type="ECO:0000256" key="3">
    <source>
        <dbReference type="SAM" id="MobiDB-lite"/>
    </source>
</evidence>
<evidence type="ECO:0000269" key="4">
    <source>
    </source>
</evidence>
<evidence type="ECO:0000269" key="5">
    <source>
    </source>
</evidence>
<evidence type="ECO:0000303" key="6">
    <source>
    </source>
</evidence>
<evidence type="ECO:0000303" key="7">
    <source>
    </source>
</evidence>
<evidence type="ECO:0000303" key="8">
    <source ref="2"/>
</evidence>
<evidence type="ECO:0000305" key="9"/>
<evidence type="ECO:0000312" key="10">
    <source>
        <dbReference type="EMBL" id="AAC41269.1"/>
    </source>
</evidence>
<evidence type="ECO:0000312" key="11">
    <source>
        <dbReference type="EMBL" id="AAH57739.1"/>
    </source>
</evidence>
<gene>
    <name evidence="1" type="primary">runx1</name>
    <name evidence="10" type="synonym">aml</name>
    <name evidence="7" type="synonym">cbfa2</name>
</gene>